<sequence length="157" mass="18577">MFDVLMYLFETYIHNEPEMRVDQDQLTDDLAQAGFHRDDIYNALNWLEKLADLQEGENAPYFMDADPLAMRIYTEEEGVRLDASCRGFLLFLEQIQVLNLETREMVIDRVMALDNTEFDLEDLKWVVLMVLFNIPGYESAYQQMEELLFEVNEGYLH</sequence>
<comment type="similarity">
    <text evidence="1">Belongs to the Smg family.</text>
</comment>
<feature type="chain" id="PRO_1000061243" description="Protein Smg">
    <location>
        <begin position="1"/>
        <end position="157"/>
    </location>
</feature>
<organism>
    <name type="scientific">Serratia proteamaculans (strain 568)</name>
    <dbReference type="NCBI Taxonomy" id="399741"/>
    <lineage>
        <taxon>Bacteria</taxon>
        <taxon>Pseudomonadati</taxon>
        <taxon>Pseudomonadota</taxon>
        <taxon>Gammaproteobacteria</taxon>
        <taxon>Enterobacterales</taxon>
        <taxon>Yersiniaceae</taxon>
        <taxon>Serratia</taxon>
    </lineage>
</organism>
<dbReference type="EMBL" id="CP000826">
    <property type="protein sequence ID" value="ABV43603.1"/>
    <property type="molecule type" value="Genomic_DNA"/>
</dbReference>
<dbReference type="SMR" id="A8GKG3"/>
<dbReference type="STRING" id="399741.Spro_4509"/>
<dbReference type="KEGG" id="spe:Spro_4509"/>
<dbReference type="eggNOG" id="COG2922">
    <property type="taxonomic scope" value="Bacteria"/>
</dbReference>
<dbReference type="HOGENOM" id="CLU_133242_0_0_6"/>
<dbReference type="OrthoDB" id="9788984at2"/>
<dbReference type="HAMAP" id="MF_00598">
    <property type="entry name" value="Smg"/>
    <property type="match status" value="1"/>
</dbReference>
<dbReference type="InterPro" id="IPR007456">
    <property type="entry name" value="Smg"/>
</dbReference>
<dbReference type="NCBIfam" id="NF002897">
    <property type="entry name" value="PRK03430.1"/>
    <property type="match status" value="1"/>
</dbReference>
<dbReference type="PANTHER" id="PTHR38692">
    <property type="entry name" value="PROTEIN SMG"/>
    <property type="match status" value="1"/>
</dbReference>
<dbReference type="PANTHER" id="PTHR38692:SF1">
    <property type="entry name" value="PROTEIN SMG"/>
    <property type="match status" value="1"/>
</dbReference>
<dbReference type="Pfam" id="PF04361">
    <property type="entry name" value="DUF494"/>
    <property type="match status" value="1"/>
</dbReference>
<proteinExistence type="inferred from homology"/>
<accession>A8GKG3</accession>
<gene>
    <name evidence="1" type="primary">smg</name>
    <name type="ordered locus">Spro_4509</name>
</gene>
<evidence type="ECO:0000255" key="1">
    <source>
        <dbReference type="HAMAP-Rule" id="MF_00598"/>
    </source>
</evidence>
<name>SMG_SERP5</name>
<reference key="1">
    <citation type="submission" date="2007-09" db="EMBL/GenBank/DDBJ databases">
        <title>Complete sequence of chromosome of Serratia proteamaculans 568.</title>
        <authorList>
            <consortium name="US DOE Joint Genome Institute"/>
            <person name="Copeland A."/>
            <person name="Lucas S."/>
            <person name="Lapidus A."/>
            <person name="Barry K."/>
            <person name="Glavina del Rio T."/>
            <person name="Dalin E."/>
            <person name="Tice H."/>
            <person name="Pitluck S."/>
            <person name="Chain P."/>
            <person name="Malfatti S."/>
            <person name="Shin M."/>
            <person name="Vergez L."/>
            <person name="Schmutz J."/>
            <person name="Larimer F."/>
            <person name="Land M."/>
            <person name="Hauser L."/>
            <person name="Kyrpides N."/>
            <person name="Kim E."/>
            <person name="Taghavi S."/>
            <person name="Newman L."/>
            <person name="Vangronsveld J."/>
            <person name="van der Lelie D."/>
            <person name="Richardson P."/>
        </authorList>
    </citation>
    <scope>NUCLEOTIDE SEQUENCE [LARGE SCALE GENOMIC DNA]</scope>
    <source>
        <strain>568</strain>
    </source>
</reference>
<protein>
    <recommendedName>
        <fullName evidence="1">Protein Smg</fullName>
    </recommendedName>
</protein>